<protein>
    <recommendedName>
        <fullName>Probable sphingolipid transporter spinster homolog 1</fullName>
    </recommendedName>
</protein>
<evidence type="ECO:0000250" key="1"/>
<evidence type="ECO:0000255" key="2"/>
<evidence type="ECO:0000256" key="3">
    <source>
        <dbReference type="SAM" id="MobiDB-lite"/>
    </source>
</evidence>
<evidence type="ECO:0000305" key="4"/>
<evidence type="ECO:0007744" key="5">
    <source>
    </source>
</evidence>
<reference key="1">
    <citation type="journal article" date="1998" name="DNA Res.">
        <title>Structural analysis of Arabidopsis thaliana chromosome 5. IV. Sequence features of the regions of 1,456,315 bp covered by nineteen physically assigned P1 and TAC clones.</title>
        <authorList>
            <person name="Sato S."/>
            <person name="Kaneko T."/>
            <person name="Kotani H."/>
            <person name="Nakamura Y."/>
            <person name="Asamizu E."/>
            <person name="Miyajima N."/>
            <person name="Tabata S."/>
        </authorList>
    </citation>
    <scope>NUCLEOTIDE SEQUENCE [LARGE SCALE GENOMIC DNA]</scope>
    <source>
        <strain>cv. Columbia</strain>
    </source>
</reference>
<reference key="2">
    <citation type="journal article" date="2000" name="Nature">
        <title>Sequence and analysis of chromosome 5 of the plant Arabidopsis thaliana.</title>
        <authorList>
            <person name="Tabata S."/>
            <person name="Kaneko T."/>
            <person name="Nakamura Y."/>
            <person name="Kotani H."/>
            <person name="Kato T."/>
            <person name="Asamizu E."/>
            <person name="Miyajima N."/>
            <person name="Sasamoto S."/>
            <person name="Kimura T."/>
            <person name="Hosouchi T."/>
            <person name="Kawashima K."/>
            <person name="Kohara M."/>
            <person name="Matsumoto M."/>
            <person name="Matsuno A."/>
            <person name="Muraki A."/>
            <person name="Nakayama S."/>
            <person name="Nakazaki N."/>
            <person name="Naruo K."/>
            <person name="Okumura S."/>
            <person name="Shinpo S."/>
            <person name="Takeuchi C."/>
            <person name="Wada T."/>
            <person name="Watanabe A."/>
            <person name="Yamada M."/>
            <person name="Yasuda M."/>
            <person name="Sato S."/>
            <person name="de la Bastide M."/>
            <person name="Huang E."/>
            <person name="Spiegel L."/>
            <person name="Gnoj L."/>
            <person name="O'Shaughnessy A."/>
            <person name="Preston R."/>
            <person name="Habermann K."/>
            <person name="Murray J."/>
            <person name="Johnson D."/>
            <person name="Rohlfing T."/>
            <person name="Nelson J."/>
            <person name="Stoneking T."/>
            <person name="Pepin K."/>
            <person name="Spieth J."/>
            <person name="Sekhon M."/>
            <person name="Armstrong J."/>
            <person name="Becker M."/>
            <person name="Belter E."/>
            <person name="Cordum H."/>
            <person name="Cordes M."/>
            <person name="Courtney L."/>
            <person name="Courtney W."/>
            <person name="Dante M."/>
            <person name="Du H."/>
            <person name="Edwards J."/>
            <person name="Fryman J."/>
            <person name="Haakensen B."/>
            <person name="Lamar E."/>
            <person name="Latreille P."/>
            <person name="Leonard S."/>
            <person name="Meyer R."/>
            <person name="Mulvaney E."/>
            <person name="Ozersky P."/>
            <person name="Riley A."/>
            <person name="Strowmatt C."/>
            <person name="Wagner-McPherson C."/>
            <person name="Wollam A."/>
            <person name="Yoakum M."/>
            <person name="Bell M."/>
            <person name="Dedhia N."/>
            <person name="Parnell L."/>
            <person name="Shah R."/>
            <person name="Rodriguez M."/>
            <person name="Hoon See L."/>
            <person name="Vil D."/>
            <person name="Baker J."/>
            <person name="Kirchoff K."/>
            <person name="Toth K."/>
            <person name="King L."/>
            <person name="Bahret A."/>
            <person name="Miller B."/>
            <person name="Marra M.A."/>
            <person name="Martienssen R."/>
            <person name="McCombie W.R."/>
            <person name="Wilson R.K."/>
            <person name="Murphy G."/>
            <person name="Bancroft I."/>
            <person name="Volckaert G."/>
            <person name="Wambutt R."/>
            <person name="Duesterhoeft A."/>
            <person name="Stiekema W."/>
            <person name="Pohl T."/>
            <person name="Entian K.-D."/>
            <person name="Terryn N."/>
            <person name="Hartley N."/>
            <person name="Bent E."/>
            <person name="Johnson S."/>
            <person name="Langham S.-A."/>
            <person name="McCullagh B."/>
            <person name="Robben J."/>
            <person name="Grymonprez B."/>
            <person name="Zimmermann W."/>
            <person name="Ramsperger U."/>
            <person name="Wedler H."/>
            <person name="Balke K."/>
            <person name="Wedler E."/>
            <person name="Peters S."/>
            <person name="van Staveren M."/>
            <person name="Dirkse W."/>
            <person name="Mooijman P."/>
            <person name="Klein Lankhorst R."/>
            <person name="Weitzenegger T."/>
            <person name="Bothe G."/>
            <person name="Rose M."/>
            <person name="Hauf J."/>
            <person name="Berneiser S."/>
            <person name="Hempel S."/>
            <person name="Feldpausch M."/>
            <person name="Lamberth S."/>
            <person name="Villarroel R."/>
            <person name="Gielen J."/>
            <person name="Ardiles W."/>
            <person name="Bents O."/>
            <person name="Lemcke K."/>
            <person name="Kolesov G."/>
            <person name="Mayer K.F.X."/>
            <person name="Rudd S."/>
            <person name="Schoof H."/>
            <person name="Schueller C."/>
            <person name="Zaccaria P."/>
            <person name="Mewes H.-W."/>
            <person name="Bevan M."/>
            <person name="Fransz P.F."/>
        </authorList>
    </citation>
    <scope>NUCLEOTIDE SEQUENCE [LARGE SCALE GENOMIC DNA]</scope>
    <source>
        <strain>cv. Columbia</strain>
    </source>
</reference>
<reference key="3">
    <citation type="journal article" date="2017" name="Plant J.">
        <title>Araport11: a complete reannotation of the Arabidopsis thaliana reference genome.</title>
        <authorList>
            <person name="Cheng C.Y."/>
            <person name="Krishnakumar V."/>
            <person name="Chan A.P."/>
            <person name="Thibaud-Nissen F."/>
            <person name="Schobel S."/>
            <person name="Town C.D."/>
        </authorList>
    </citation>
    <scope>GENOME REANNOTATION</scope>
    <source>
        <strain>cv. Columbia</strain>
    </source>
</reference>
<reference key="4">
    <citation type="submission" date="2004-02" db="EMBL/GenBank/DDBJ databases">
        <title>Arabidopsis cDNA clones.</title>
        <authorList>
            <person name="Kim C.J."/>
            <person name="Chen H."/>
            <person name="Cheuk R.F."/>
            <person name="Shinn P."/>
            <person name="Ecker J.R."/>
        </authorList>
    </citation>
    <scope>NUCLEOTIDE SEQUENCE [LARGE SCALE MRNA]</scope>
    <source>
        <strain>cv. Columbia</strain>
    </source>
</reference>
<reference key="5">
    <citation type="journal article" date="2009" name="J. Proteomics">
        <title>Phosphoproteomic analysis of nuclei-enriched fractions from Arabidopsis thaliana.</title>
        <authorList>
            <person name="Jones A.M.E."/>
            <person name="MacLean D."/>
            <person name="Studholme D.J."/>
            <person name="Serna-Sanz A."/>
            <person name="Andreasson E."/>
            <person name="Rathjen J.P."/>
            <person name="Peck S.C."/>
        </authorList>
    </citation>
    <scope>PHOSPHORYLATION [LARGE SCALE ANALYSIS] AT SER-472</scope>
    <scope>IDENTIFICATION BY MASS SPECTROMETRY [LARGE SCALE ANALYSIS]</scope>
    <source>
        <strain>cv. Columbia</strain>
    </source>
</reference>
<comment type="function">
    <text evidence="1">Probable sphingolipid transporter that plays a central role in endosomes and/or lysosomes storage.</text>
</comment>
<comment type="subcellular location">
    <subcellularLocation>
        <location evidence="1">Late endosome membrane</location>
        <topology evidence="1">Multi-pass membrane protein</topology>
    </subcellularLocation>
    <subcellularLocation>
        <location evidence="1">Lysosome membrane</location>
        <topology evidence="1">Multi-pass membrane protein</topology>
    </subcellularLocation>
</comment>
<comment type="similarity">
    <text evidence="4">Belongs to the major facilitator superfamily. Spinster (TC 2.A.1.49) family.</text>
</comment>
<comment type="sequence caution" evidence="4">
    <conflict type="erroneous gene model prediction">
        <sequence resource="EMBL-CDS" id="BAB10676"/>
    </conflict>
</comment>
<comment type="sequence caution" evidence="4">
    <conflict type="erroneous gene model prediction">
        <sequence resource="EMBL-CDS" id="CAA16689"/>
    </conflict>
</comment>
<proteinExistence type="evidence at protein level"/>
<name>SPNS1_ARATH</name>
<accession>Q6NMN6</accession>
<accession>O49546</accession>
<feature type="chain" id="PRO_0000415369" description="Probable sphingolipid transporter spinster homolog 1">
    <location>
        <begin position="1"/>
        <end position="492"/>
    </location>
</feature>
<feature type="transmembrane region" description="Helical" evidence="2">
    <location>
        <begin position="29"/>
        <end position="49"/>
    </location>
</feature>
<feature type="transmembrane region" description="Helical" evidence="2">
    <location>
        <begin position="83"/>
        <end position="103"/>
    </location>
</feature>
<feature type="transmembrane region" description="Helical" evidence="2">
    <location>
        <begin position="119"/>
        <end position="139"/>
    </location>
</feature>
<feature type="transmembrane region" description="Helical" evidence="2">
    <location>
        <begin position="141"/>
        <end position="161"/>
    </location>
</feature>
<feature type="transmembrane region" description="Helical" evidence="2">
    <location>
        <begin position="169"/>
        <end position="189"/>
    </location>
</feature>
<feature type="transmembrane region" description="Helical" evidence="2">
    <location>
        <begin position="200"/>
        <end position="220"/>
    </location>
</feature>
<feature type="transmembrane region" description="Helical" evidence="2">
    <location>
        <begin position="279"/>
        <end position="299"/>
    </location>
</feature>
<feature type="transmembrane region" description="Helical" evidence="2">
    <location>
        <begin position="317"/>
        <end position="337"/>
    </location>
</feature>
<feature type="transmembrane region" description="Helical" evidence="2">
    <location>
        <begin position="348"/>
        <end position="368"/>
    </location>
</feature>
<feature type="transmembrane region" description="Helical" evidence="2">
    <location>
        <begin position="372"/>
        <end position="392"/>
    </location>
</feature>
<feature type="transmembrane region" description="Helical" evidence="2">
    <location>
        <begin position="407"/>
        <end position="427"/>
    </location>
</feature>
<feature type="transmembrane region" description="Helical" evidence="2">
    <location>
        <begin position="442"/>
        <end position="462"/>
    </location>
</feature>
<feature type="region of interest" description="Disordered" evidence="3">
    <location>
        <begin position="472"/>
        <end position="492"/>
    </location>
</feature>
<feature type="compositionally biased region" description="Acidic residues" evidence="3">
    <location>
        <begin position="472"/>
        <end position="481"/>
    </location>
</feature>
<feature type="modified residue" description="Phosphoserine" evidence="5">
    <location>
        <position position="472"/>
    </location>
</feature>
<feature type="glycosylation site" description="N-linked (GlcNAc...) asparagine" evidence="2">
    <location>
        <position position="53"/>
    </location>
</feature>
<feature type="glycosylation site" description="N-linked (GlcNAc...) asparagine" evidence="2">
    <location>
        <position position="76"/>
    </location>
</feature>
<feature type="glycosylation site" description="N-linked (GlcNAc...) asparagine" evidence="2">
    <location>
        <position position="341"/>
    </location>
</feature>
<feature type="glycosylation site" description="N-linked (GlcNAc...) asparagine" evidence="2">
    <location>
        <position position="488"/>
    </location>
</feature>
<keyword id="KW-0967">Endosome</keyword>
<keyword id="KW-0325">Glycoprotein</keyword>
<keyword id="KW-0445">Lipid transport</keyword>
<keyword id="KW-0458">Lysosome</keyword>
<keyword id="KW-0472">Membrane</keyword>
<keyword id="KW-0597">Phosphoprotein</keyword>
<keyword id="KW-1185">Reference proteome</keyword>
<keyword id="KW-0812">Transmembrane</keyword>
<keyword id="KW-1133">Transmembrane helix</keyword>
<keyword id="KW-0813">Transport</keyword>
<organism>
    <name type="scientific">Arabidopsis thaliana</name>
    <name type="common">Mouse-ear cress</name>
    <dbReference type="NCBI Taxonomy" id="3702"/>
    <lineage>
        <taxon>Eukaryota</taxon>
        <taxon>Viridiplantae</taxon>
        <taxon>Streptophyta</taxon>
        <taxon>Embryophyta</taxon>
        <taxon>Tracheophyta</taxon>
        <taxon>Spermatophyta</taxon>
        <taxon>Magnoliopsida</taxon>
        <taxon>eudicotyledons</taxon>
        <taxon>Gunneridae</taxon>
        <taxon>Pentapetalae</taxon>
        <taxon>rosids</taxon>
        <taxon>malvids</taxon>
        <taxon>Brassicales</taxon>
        <taxon>Brassicaceae</taxon>
        <taxon>Camelineae</taxon>
        <taxon>Arabidopsis</taxon>
    </lineage>
</organism>
<dbReference type="EMBL" id="AB010075">
    <property type="protein sequence ID" value="BAB10676.1"/>
    <property type="status" value="ALT_SEQ"/>
    <property type="molecule type" value="Genomic_DNA"/>
</dbReference>
<dbReference type="EMBL" id="AL021684">
    <property type="protein sequence ID" value="CAA16689.1"/>
    <property type="status" value="ALT_SEQ"/>
    <property type="molecule type" value="Genomic_DNA"/>
</dbReference>
<dbReference type="EMBL" id="CP002688">
    <property type="protein sequence ID" value="AED98088.1"/>
    <property type="molecule type" value="Genomic_DNA"/>
</dbReference>
<dbReference type="EMBL" id="BT011621">
    <property type="protein sequence ID" value="AAS47627.1"/>
    <property type="molecule type" value="mRNA"/>
</dbReference>
<dbReference type="EMBL" id="BT014809">
    <property type="protein sequence ID" value="AAT41792.1"/>
    <property type="molecule type" value="mRNA"/>
</dbReference>
<dbReference type="PIR" id="T05899">
    <property type="entry name" value="T05899"/>
</dbReference>
<dbReference type="RefSeq" id="NP_680469.1">
    <property type="nucleotide sequence ID" value="NM_148164.5"/>
</dbReference>
<dbReference type="SMR" id="Q6NMN6"/>
<dbReference type="BioGRID" id="21939">
    <property type="interactions" value="1"/>
</dbReference>
<dbReference type="FunCoup" id="Q6NMN6">
    <property type="interactions" value="3364"/>
</dbReference>
<dbReference type="IntAct" id="Q6NMN6">
    <property type="interactions" value="1"/>
</dbReference>
<dbReference type="STRING" id="3702.Q6NMN6"/>
<dbReference type="TCDB" id="2.A.1.49.5">
    <property type="family name" value="the major facilitator superfamily (mfs)"/>
</dbReference>
<dbReference type="GlyGen" id="Q6NMN6">
    <property type="glycosylation" value="5 sites"/>
</dbReference>
<dbReference type="iPTMnet" id="Q6NMN6"/>
<dbReference type="PaxDb" id="3702-AT5G65687.1"/>
<dbReference type="ProteomicsDB" id="228316"/>
<dbReference type="EnsemblPlants" id="AT5G65687.1">
    <property type="protein sequence ID" value="AT5G65687.1"/>
    <property type="gene ID" value="AT5G65687"/>
</dbReference>
<dbReference type="GeneID" id="836697"/>
<dbReference type="Gramene" id="AT5G65687.1">
    <property type="protein sequence ID" value="AT5G65687.1"/>
    <property type="gene ID" value="AT5G65687"/>
</dbReference>
<dbReference type="KEGG" id="ath:AT5G65687"/>
<dbReference type="Araport" id="AT5G65687"/>
<dbReference type="TAIR" id="AT5G65687"/>
<dbReference type="eggNOG" id="KOG1330">
    <property type="taxonomic scope" value="Eukaryota"/>
</dbReference>
<dbReference type="HOGENOM" id="CLU_001265_55_3_1"/>
<dbReference type="InParanoid" id="Q6NMN6"/>
<dbReference type="OMA" id="WAWIPPE"/>
<dbReference type="PhylomeDB" id="Q6NMN6"/>
<dbReference type="PRO" id="PR:Q6NMN6"/>
<dbReference type="Proteomes" id="UP000006548">
    <property type="component" value="Chromosome 5"/>
</dbReference>
<dbReference type="ExpressionAtlas" id="Q6NMN6">
    <property type="expression patterns" value="baseline and differential"/>
</dbReference>
<dbReference type="GO" id="GO:0031902">
    <property type="term" value="C:late endosome membrane"/>
    <property type="evidence" value="ECO:0007669"/>
    <property type="project" value="UniProtKB-SubCell"/>
</dbReference>
<dbReference type="GO" id="GO:0005765">
    <property type="term" value="C:lysosomal membrane"/>
    <property type="evidence" value="ECO:0007669"/>
    <property type="project" value="UniProtKB-SubCell"/>
</dbReference>
<dbReference type="GO" id="GO:0022857">
    <property type="term" value="F:transmembrane transporter activity"/>
    <property type="evidence" value="ECO:0007669"/>
    <property type="project" value="InterPro"/>
</dbReference>
<dbReference type="GO" id="GO:0006869">
    <property type="term" value="P:lipid transport"/>
    <property type="evidence" value="ECO:0007669"/>
    <property type="project" value="UniProtKB-KW"/>
</dbReference>
<dbReference type="CDD" id="cd17328">
    <property type="entry name" value="MFS_spinster_like"/>
    <property type="match status" value="1"/>
</dbReference>
<dbReference type="FunFam" id="1.20.1250.20:FF:000990">
    <property type="entry name" value="Probable sphingolipid transporter spinster homolog 1"/>
    <property type="match status" value="1"/>
</dbReference>
<dbReference type="Gene3D" id="1.20.1250.20">
    <property type="entry name" value="MFS general substrate transporter like domains"/>
    <property type="match status" value="1"/>
</dbReference>
<dbReference type="InterPro" id="IPR011701">
    <property type="entry name" value="MFS"/>
</dbReference>
<dbReference type="InterPro" id="IPR020846">
    <property type="entry name" value="MFS_dom"/>
</dbReference>
<dbReference type="InterPro" id="IPR044770">
    <property type="entry name" value="MFS_spinster-like"/>
</dbReference>
<dbReference type="InterPro" id="IPR036259">
    <property type="entry name" value="MFS_trans_sf"/>
</dbReference>
<dbReference type="PANTHER" id="PTHR23505:SF80">
    <property type="entry name" value="SPHINGOLIPID TRANSPORTER SPINSTER HOMOLOG 1-RELATED"/>
    <property type="match status" value="1"/>
</dbReference>
<dbReference type="PANTHER" id="PTHR23505">
    <property type="entry name" value="SPINSTER"/>
    <property type="match status" value="1"/>
</dbReference>
<dbReference type="Pfam" id="PF07690">
    <property type="entry name" value="MFS_1"/>
    <property type="match status" value="1"/>
</dbReference>
<dbReference type="SUPFAM" id="SSF103473">
    <property type="entry name" value="MFS general substrate transporter"/>
    <property type="match status" value="1"/>
</dbReference>
<dbReference type="PROSITE" id="PS50850">
    <property type="entry name" value="MFS"/>
    <property type="match status" value="1"/>
</dbReference>
<gene>
    <name type="ordered locus">At5g65687</name>
    <name type="ORF">F6H11.180</name>
</gene>
<sequence>MTRVGQRDSPAKEEAPPATKKRFLTPGRFVTILCIINLINYVDRGVIASNGVNGSSKVCDAKGVCSAGTGIQGEFNLTNFEDGLLSSAFMVGLLVASPIFAGLSKRFNPFKLIGVGLTVWTIAVIGCGFSYNFWMIAVFRMFVGVGEASFISLAAPYIDDSAPVARKNFWLGLFYMCIPAGVALGYVFGGYIGNHLGWRWAFYIEAIAMAVFVILSFCIKPPQQLKGFADKDSKKPSTSIETVAPTDAEASQIKTKTPKSKNLVVLFGKDLKALFSEKVFIVNVLGYITYNFVIGAYSYWGPKAGFGIYKMKNADMIFGGLTIICGIIGTLGGSYVLDRINATLSNTFKLLAASTLLGAAFCFTAFLMKNMYAFIALFAVGEILIFAPQAPVNFVCLHCVRPNLRPLSMASSTVLIHILGDVPSSPLYGKMQDHLKNWRKSTLIITSILFLAAIIWGIGIFMNSVDRSNEVSEDDEVEEDKLESKTENSTLA</sequence>